<organism>
    <name type="scientific">Finegoldia magna (strain ATCC 29328 / DSM 20472 / WAL 2508)</name>
    <name type="common">Peptostreptococcus magnus</name>
    <dbReference type="NCBI Taxonomy" id="334413"/>
    <lineage>
        <taxon>Bacteria</taxon>
        <taxon>Bacillati</taxon>
        <taxon>Bacillota</taxon>
        <taxon>Tissierellia</taxon>
        <taxon>Tissierellales</taxon>
        <taxon>Peptoniphilaceae</taxon>
        <taxon>Finegoldia</taxon>
    </lineage>
</organism>
<evidence type="ECO:0000255" key="1">
    <source>
        <dbReference type="HAMAP-Rule" id="MF_01007"/>
    </source>
</evidence>
<keyword id="KW-0963">Cytoplasm</keyword>
<keyword id="KW-0489">Methyltransferase</keyword>
<keyword id="KW-1185">Reference proteome</keyword>
<keyword id="KW-0698">rRNA processing</keyword>
<keyword id="KW-0949">S-adenosyl-L-methionine</keyword>
<keyword id="KW-0808">Transferase</keyword>
<gene>
    <name evidence="1" type="primary">rsmH</name>
    <name type="synonym">mraW</name>
    <name type="ordered locus">FMG_0611</name>
</gene>
<accession>B0S0Y9</accession>
<protein>
    <recommendedName>
        <fullName evidence="1">Ribosomal RNA small subunit methyltransferase H</fullName>
        <ecNumber evidence="1">2.1.1.199</ecNumber>
    </recommendedName>
    <alternativeName>
        <fullName evidence="1">16S rRNA m(4)C1402 methyltransferase</fullName>
    </alternativeName>
    <alternativeName>
        <fullName evidence="1">rRNA (cytosine-N(4)-)-methyltransferase RsmH</fullName>
    </alternativeName>
</protein>
<name>RSMH_FINM2</name>
<sequence>MEFKHVPILLNECIENLNIRDGKIYVDCTVGGAGHSREIAKRIGNGKLICFDQDEDALKVAKQRLEEFGDKIIFIKDNFKNIKNDLHNLGIEKVDGILMDIGVSSYQIDEDSRGFSYMHDADLDMRMDQSNPISAKDIVNTYSKEDLENVIFKYSDEKWAKRIAEFICNARETKPINTTFELVEVIEKAIPKKVRMNQKGHSAKKTFQAIRIEVNKELDVLEQAVGDSIDLLNPEGRICIITFHSLEDKICKDIFRQRQKGCICPPEIPVCVCNHKPEIKIITRKPIEPSKEELEQNSRARSAKLRVAEKII</sequence>
<feature type="chain" id="PRO_0000386894" description="Ribosomal RNA small subunit methyltransferase H">
    <location>
        <begin position="1"/>
        <end position="312"/>
    </location>
</feature>
<feature type="binding site" evidence="1">
    <location>
        <begin position="33"/>
        <end position="35"/>
    </location>
    <ligand>
        <name>S-adenosyl-L-methionine</name>
        <dbReference type="ChEBI" id="CHEBI:59789"/>
    </ligand>
</feature>
<feature type="binding site" evidence="1">
    <location>
        <position position="52"/>
    </location>
    <ligand>
        <name>S-adenosyl-L-methionine</name>
        <dbReference type="ChEBI" id="CHEBI:59789"/>
    </ligand>
</feature>
<feature type="binding site" evidence="1">
    <location>
        <position position="79"/>
    </location>
    <ligand>
        <name>S-adenosyl-L-methionine</name>
        <dbReference type="ChEBI" id="CHEBI:59789"/>
    </ligand>
</feature>
<feature type="binding site" evidence="1">
    <location>
        <position position="100"/>
    </location>
    <ligand>
        <name>S-adenosyl-L-methionine</name>
        <dbReference type="ChEBI" id="CHEBI:59789"/>
    </ligand>
</feature>
<feature type="binding site" evidence="1">
    <location>
        <position position="107"/>
    </location>
    <ligand>
        <name>S-adenosyl-L-methionine</name>
        <dbReference type="ChEBI" id="CHEBI:59789"/>
    </ligand>
</feature>
<reference key="1">
    <citation type="journal article" date="2008" name="DNA Res.">
        <title>Complete genome sequence of Finegoldia magna, an anaerobic opportunistic pathogen.</title>
        <authorList>
            <person name="Goto T."/>
            <person name="Yamashita A."/>
            <person name="Hirakawa H."/>
            <person name="Matsutani M."/>
            <person name="Todo K."/>
            <person name="Ohshima K."/>
            <person name="Toh H."/>
            <person name="Miyamoto K."/>
            <person name="Kuhara S."/>
            <person name="Hattori M."/>
            <person name="Shimizu T."/>
            <person name="Akimoto S."/>
        </authorList>
    </citation>
    <scope>NUCLEOTIDE SEQUENCE [LARGE SCALE GENOMIC DNA]</scope>
    <source>
        <strain>ATCC 29328 / DSM 20472 / WAL 2508</strain>
    </source>
</reference>
<comment type="function">
    <text evidence="1">Specifically methylates the N4 position of cytidine in position 1402 (C1402) of 16S rRNA.</text>
</comment>
<comment type="catalytic activity">
    <reaction evidence="1">
        <text>cytidine(1402) in 16S rRNA + S-adenosyl-L-methionine = N(4)-methylcytidine(1402) in 16S rRNA + S-adenosyl-L-homocysteine + H(+)</text>
        <dbReference type="Rhea" id="RHEA:42928"/>
        <dbReference type="Rhea" id="RHEA-COMP:10286"/>
        <dbReference type="Rhea" id="RHEA-COMP:10287"/>
        <dbReference type="ChEBI" id="CHEBI:15378"/>
        <dbReference type="ChEBI" id="CHEBI:57856"/>
        <dbReference type="ChEBI" id="CHEBI:59789"/>
        <dbReference type="ChEBI" id="CHEBI:74506"/>
        <dbReference type="ChEBI" id="CHEBI:82748"/>
        <dbReference type="EC" id="2.1.1.199"/>
    </reaction>
</comment>
<comment type="subcellular location">
    <subcellularLocation>
        <location evidence="1">Cytoplasm</location>
    </subcellularLocation>
</comment>
<comment type="similarity">
    <text evidence="1">Belongs to the methyltransferase superfamily. RsmH family.</text>
</comment>
<proteinExistence type="inferred from homology"/>
<dbReference type="EC" id="2.1.1.199" evidence="1"/>
<dbReference type="EMBL" id="AP008971">
    <property type="protein sequence ID" value="BAG08029.1"/>
    <property type="molecule type" value="Genomic_DNA"/>
</dbReference>
<dbReference type="RefSeq" id="WP_012290516.1">
    <property type="nucleotide sequence ID" value="NC_010376.1"/>
</dbReference>
<dbReference type="SMR" id="B0S0Y9"/>
<dbReference type="STRING" id="334413.FMG_0611"/>
<dbReference type="KEGG" id="fma:FMG_0611"/>
<dbReference type="eggNOG" id="COG0275">
    <property type="taxonomic scope" value="Bacteria"/>
</dbReference>
<dbReference type="HOGENOM" id="CLU_038422_2_0_9"/>
<dbReference type="Proteomes" id="UP000001319">
    <property type="component" value="Chromosome"/>
</dbReference>
<dbReference type="GO" id="GO:0005737">
    <property type="term" value="C:cytoplasm"/>
    <property type="evidence" value="ECO:0007669"/>
    <property type="project" value="UniProtKB-SubCell"/>
</dbReference>
<dbReference type="GO" id="GO:0071424">
    <property type="term" value="F:rRNA (cytosine-N4-)-methyltransferase activity"/>
    <property type="evidence" value="ECO:0007669"/>
    <property type="project" value="UniProtKB-UniRule"/>
</dbReference>
<dbReference type="GO" id="GO:0070475">
    <property type="term" value="P:rRNA base methylation"/>
    <property type="evidence" value="ECO:0007669"/>
    <property type="project" value="UniProtKB-UniRule"/>
</dbReference>
<dbReference type="CDD" id="cd02440">
    <property type="entry name" value="AdoMet_MTases"/>
    <property type="match status" value="1"/>
</dbReference>
<dbReference type="Gene3D" id="1.10.150.170">
    <property type="entry name" value="Putative methyltransferase TM0872, insert domain"/>
    <property type="match status" value="1"/>
</dbReference>
<dbReference type="Gene3D" id="3.40.50.150">
    <property type="entry name" value="Vaccinia Virus protein VP39"/>
    <property type="match status" value="1"/>
</dbReference>
<dbReference type="HAMAP" id="MF_01007">
    <property type="entry name" value="16SrRNA_methyltr_H"/>
    <property type="match status" value="1"/>
</dbReference>
<dbReference type="InterPro" id="IPR002903">
    <property type="entry name" value="RsmH"/>
</dbReference>
<dbReference type="InterPro" id="IPR023397">
    <property type="entry name" value="SAM-dep_MeTrfase_MraW_recog"/>
</dbReference>
<dbReference type="InterPro" id="IPR029063">
    <property type="entry name" value="SAM-dependent_MTases_sf"/>
</dbReference>
<dbReference type="NCBIfam" id="TIGR00006">
    <property type="entry name" value="16S rRNA (cytosine(1402)-N(4))-methyltransferase RsmH"/>
    <property type="match status" value="1"/>
</dbReference>
<dbReference type="PANTHER" id="PTHR11265:SF0">
    <property type="entry name" value="12S RRNA N4-METHYLCYTIDINE METHYLTRANSFERASE"/>
    <property type="match status" value="1"/>
</dbReference>
<dbReference type="PANTHER" id="PTHR11265">
    <property type="entry name" value="S-ADENOSYL-METHYLTRANSFERASE MRAW"/>
    <property type="match status" value="1"/>
</dbReference>
<dbReference type="Pfam" id="PF01795">
    <property type="entry name" value="Methyltransf_5"/>
    <property type="match status" value="1"/>
</dbReference>
<dbReference type="PIRSF" id="PIRSF004486">
    <property type="entry name" value="MraW"/>
    <property type="match status" value="1"/>
</dbReference>
<dbReference type="SUPFAM" id="SSF81799">
    <property type="entry name" value="Putative methyltransferase TM0872, insert domain"/>
    <property type="match status" value="1"/>
</dbReference>
<dbReference type="SUPFAM" id="SSF53335">
    <property type="entry name" value="S-adenosyl-L-methionine-dependent methyltransferases"/>
    <property type="match status" value="1"/>
</dbReference>